<accession>Q61476</accession>
<accession>E9QLT3</accession>
<feature type="signal peptide" evidence="3">
    <location>
        <begin position="1"/>
        <end position="39"/>
    </location>
</feature>
<feature type="chain" id="PRO_0000006006" description="Complement decay-accelerating factor transmembrane isoform">
    <location>
        <begin position="40"/>
        <end position="407"/>
    </location>
</feature>
<feature type="topological domain" description="Extracellular" evidence="3">
    <location>
        <begin position="40"/>
        <end position="368"/>
    </location>
</feature>
<feature type="transmembrane region" description="Helical" evidence="3">
    <location>
        <begin position="369"/>
        <end position="389"/>
    </location>
</feature>
<feature type="topological domain" description="Cytoplasmic" evidence="3">
    <location>
        <begin position="390"/>
        <end position="407"/>
    </location>
</feature>
<feature type="domain" description="Sushi 1" evidence="4">
    <location>
        <begin position="40"/>
        <end position="101"/>
    </location>
</feature>
<feature type="domain" description="Sushi 2" evidence="4">
    <location>
        <begin position="102"/>
        <end position="165"/>
    </location>
</feature>
<feature type="domain" description="Sushi 3" evidence="4">
    <location>
        <begin position="166"/>
        <end position="227"/>
    </location>
</feature>
<feature type="domain" description="Sushi 4" evidence="4">
    <location>
        <begin position="228"/>
        <end position="291"/>
    </location>
</feature>
<feature type="region of interest" description="Disordered" evidence="5">
    <location>
        <begin position="301"/>
        <end position="361"/>
    </location>
</feature>
<feature type="compositionally biased region" description="Polar residues" evidence="5">
    <location>
        <begin position="306"/>
        <end position="324"/>
    </location>
</feature>
<feature type="compositionally biased region" description="Basic and acidic residues" evidence="5">
    <location>
        <begin position="343"/>
        <end position="357"/>
    </location>
</feature>
<feature type="glycosylation site" description="N-linked (GlcNAc...) asparagine" evidence="3">
    <location>
        <position position="192"/>
    </location>
</feature>
<feature type="glycosylation site" description="N-linked (GlcNAc...) asparagine" evidence="3">
    <location>
        <position position="267"/>
    </location>
</feature>
<feature type="disulfide bond" evidence="4">
    <location>
        <begin position="41"/>
        <end position="86"/>
    </location>
</feature>
<feature type="disulfide bond" evidence="4">
    <location>
        <begin position="70"/>
        <end position="99"/>
    </location>
</feature>
<feature type="disulfide bond" evidence="4">
    <location>
        <begin position="103"/>
        <end position="150"/>
    </location>
</feature>
<feature type="disulfide bond" evidence="4">
    <location>
        <begin position="134"/>
        <end position="163"/>
    </location>
</feature>
<feature type="disulfide bond" evidence="4">
    <location>
        <begin position="168"/>
        <end position="209"/>
    </location>
</feature>
<feature type="disulfide bond" evidence="4">
    <location>
        <begin position="195"/>
        <end position="225"/>
    </location>
</feature>
<feature type="disulfide bond" evidence="4">
    <location>
        <begin position="230"/>
        <end position="272"/>
    </location>
</feature>
<feature type="disulfide bond" evidence="4">
    <location>
        <begin position="258"/>
        <end position="289"/>
    </location>
</feature>
<feature type="sequence conflict" description="In Ref. 1; AAB00092." evidence="6" ref="1">
    <original>I</original>
    <variation>T</variation>
    <location>
        <position position="212"/>
    </location>
</feature>
<feature type="sequence conflict" description="In Ref. 1; AAB00092." evidence="6" ref="1">
    <original>T</original>
    <variation>A</variation>
    <location>
        <position position="215"/>
    </location>
</feature>
<feature type="sequence conflict" description="In Ref. 1; AAB00092." evidence="6" ref="1">
    <original>N</original>
    <variation>D</variation>
    <location>
        <position position="238"/>
    </location>
</feature>
<sequence>MVSSTWGYDPRAGAGDLVITTTAAGAVTIAVLLFQTVCGDCGPPPDIPNARPILGRHSKFAEQSKVAYSCNNGFKQVPDKSNIVVCLENGQWSSHETFCEKSCDTPERLSFASLKKEYFNMNFFPVGTIVEYECRPGFRKQPSLSGKSTCLEDLVWSPVAQFCKKKSCPNPKDLDNGHINIPTGILFGSEINFSCNPGYRLVGITSILCTIIGNTVDWDDEFPVCTEIFCPDPPKINNGIMRGESDSYKYSQVVIYSCDKGFILFGNSTIYCTVSKSDVGQWSSPPPQCIEESKVPIKKPVVNVPSTGIPSTPQKPTTESVPNPGDQPTPQKPSTVKVPATQHEPDTTTRTSTDKGESNSGGDRYIYGFVAVIAMIDSLIIVKTLWTILSPNRRSDFQGKERKDVSK</sequence>
<proteinExistence type="evidence at transcript level"/>
<gene>
    <name type="primary">Cd55b</name>
    <name type="synonym">Daf2</name>
</gene>
<evidence type="ECO:0000250" key="1"/>
<evidence type="ECO:0000250" key="2">
    <source>
        <dbReference type="UniProtKB" id="P08174"/>
    </source>
</evidence>
<evidence type="ECO:0000255" key="3"/>
<evidence type="ECO:0000255" key="4">
    <source>
        <dbReference type="PROSITE-ProRule" id="PRU00302"/>
    </source>
</evidence>
<evidence type="ECO:0000256" key="5">
    <source>
        <dbReference type="SAM" id="MobiDB-lite"/>
    </source>
</evidence>
<evidence type="ECO:0000305" key="6"/>
<protein>
    <recommendedName>
        <fullName>Complement decay-accelerating factor transmembrane isoform</fullName>
        <shortName>DAF-TM</shortName>
    </recommendedName>
    <cdAntigenName>CD55</cdAntigenName>
</protein>
<dbReference type="EMBL" id="L41365">
    <property type="protein sequence ID" value="AAB00092.1"/>
    <property type="molecule type" value="mRNA"/>
</dbReference>
<dbReference type="EMBL" id="AC111067">
    <property type="status" value="NOT_ANNOTATED_CDS"/>
    <property type="molecule type" value="Genomic_DNA"/>
</dbReference>
<dbReference type="EMBL" id="AC116692">
    <property type="status" value="NOT_ANNOTATED_CDS"/>
    <property type="molecule type" value="Genomic_DNA"/>
</dbReference>
<dbReference type="RefSeq" id="NP_001304290.1">
    <property type="nucleotide sequence ID" value="NM_001317361.1"/>
</dbReference>
<dbReference type="RefSeq" id="NP_031853.2">
    <property type="nucleotide sequence ID" value="NM_007827.3"/>
</dbReference>
<dbReference type="SMR" id="Q61476"/>
<dbReference type="FunCoup" id="Q61476">
    <property type="interactions" value="112"/>
</dbReference>
<dbReference type="STRING" id="10090.ENSMUSP00000108107"/>
<dbReference type="GlyCosmos" id="Q61476">
    <property type="glycosylation" value="2 sites, No reported glycans"/>
</dbReference>
<dbReference type="GlyGen" id="Q61476">
    <property type="glycosylation" value="3 sites"/>
</dbReference>
<dbReference type="SwissPalm" id="Q61476"/>
<dbReference type="PaxDb" id="10090-ENSMUSP00000108107"/>
<dbReference type="ProteomicsDB" id="279359"/>
<dbReference type="DNASU" id="13137"/>
<dbReference type="GeneID" id="13137"/>
<dbReference type="KEGG" id="mmu:13137"/>
<dbReference type="AGR" id="MGI:104849"/>
<dbReference type="CTD" id="13137"/>
<dbReference type="MGI" id="MGI:104849">
    <property type="gene designation" value="Cd55b"/>
</dbReference>
<dbReference type="eggNOG" id="ENOG502RXMW">
    <property type="taxonomic scope" value="Eukaryota"/>
</dbReference>
<dbReference type="InParanoid" id="Q61476"/>
<dbReference type="OrthoDB" id="406096at2759"/>
<dbReference type="BioGRID-ORCS" id="13137">
    <property type="hits" value="3 hits in 44 CRISPR screens"/>
</dbReference>
<dbReference type="PRO" id="PR:Q61476"/>
<dbReference type="Proteomes" id="UP000000589">
    <property type="component" value="Unplaced"/>
</dbReference>
<dbReference type="RNAct" id="Q61476">
    <property type="molecule type" value="protein"/>
</dbReference>
<dbReference type="GO" id="GO:0016020">
    <property type="term" value="C:membrane"/>
    <property type="evidence" value="ECO:0007669"/>
    <property type="project" value="UniProtKB-SubCell"/>
</dbReference>
<dbReference type="GO" id="GO:0006958">
    <property type="term" value="P:complement activation, classical pathway"/>
    <property type="evidence" value="ECO:0007669"/>
    <property type="project" value="UniProtKB-KW"/>
</dbReference>
<dbReference type="GO" id="GO:0045087">
    <property type="term" value="P:innate immune response"/>
    <property type="evidence" value="ECO:0007669"/>
    <property type="project" value="UniProtKB-KW"/>
</dbReference>
<dbReference type="GO" id="GO:0045916">
    <property type="term" value="P:negative regulation of complement activation"/>
    <property type="evidence" value="ECO:0000250"/>
    <property type="project" value="UniProtKB"/>
</dbReference>
<dbReference type="CDD" id="cd00033">
    <property type="entry name" value="CCP"/>
    <property type="match status" value="4"/>
</dbReference>
<dbReference type="FunFam" id="2.10.70.10:FF:000078">
    <property type="entry name" value="Complement decay-accelerating factor"/>
    <property type="match status" value="1"/>
</dbReference>
<dbReference type="FunFam" id="2.10.70.10:FF:000079">
    <property type="entry name" value="Complement decay-accelerating factor"/>
    <property type="match status" value="1"/>
</dbReference>
<dbReference type="FunFam" id="2.10.70.10:FF:000055">
    <property type="entry name" value="Complement decay-accelerating factor, GPI-anchored"/>
    <property type="match status" value="1"/>
</dbReference>
<dbReference type="FunFam" id="2.10.70.10:FF:000014">
    <property type="entry name" value="Membrane cofactor protein"/>
    <property type="match status" value="1"/>
</dbReference>
<dbReference type="Gene3D" id="2.10.70.10">
    <property type="entry name" value="Complement Module, domain 1"/>
    <property type="match status" value="4"/>
</dbReference>
<dbReference type="InterPro" id="IPR050350">
    <property type="entry name" value="Compl-Cell_Adhes-Reg"/>
</dbReference>
<dbReference type="InterPro" id="IPR035976">
    <property type="entry name" value="Sushi/SCR/CCP_sf"/>
</dbReference>
<dbReference type="InterPro" id="IPR000436">
    <property type="entry name" value="Sushi_SCR_CCP_dom"/>
</dbReference>
<dbReference type="PANTHER" id="PTHR19325">
    <property type="entry name" value="COMPLEMENT COMPONENT-RELATED SUSHI DOMAIN-CONTAINING"/>
    <property type="match status" value="1"/>
</dbReference>
<dbReference type="PANTHER" id="PTHR19325:SF317">
    <property type="entry name" value="COMPLEMENT DECAY-ACCELERATING FACTOR"/>
    <property type="match status" value="1"/>
</dbReference>
<dbReference type="Pfam" id="PF00084">
    <property type="entry name" value="Sushi"/>
    <property type="match status" value="4"/>
</dbReference>
<dbReference type="SMART" id="SM00032">
    <property type="entry name" value="CCP"/>
    <property type="match status" value="4"/>
</dbReference>
<dbReference type="SUPFAM" id="SSF57535">
    <property type="entry name" value="Complement control module/SCR domain"/>
    <property type="match status" value="4"/>
</dbReference>
<dbReference type="PROSITE" id="PS50923">
    <property type="entry name" value="SUSHI"/>
    <property type="match status" value="4"/>
</dbReference>
<comment type="function">
    <text evidence="2">This protein recognizes C4b and C3b fragments that condense with cell-surface hydroxyl or amino groups when nascent C4b and C3b are locally generated during C4 and c3 activation. Interaction of daf with cell-associated C4b and C3b polypeptides interferes with their ability to catalyze the conversion of C2 and factor B to enzymatically active C2a and Bb and thereby prevents the formation of C4b2a and C3bBb, the amplification convertases of the complement cascade. Inhibits complement activation by destabilizing and preventing the formation of C3 and C5 convertases, which prevents complement damage.</text>
</comment>
<comment type="subcellular location">
    <subcellularLocation>
        <location evidence="6">Membrane</location>
        <topology evidence="6">Single-pass type I membrane protein</topology>
    </subcellularLocation>
</comment>
<comment type="tissue specificity">
    <text>Testis, spleen and lymph node.</text>
</comment>
<comment type="domain">
    <text evidence="1">The first Sushi domain (SCR1) is not necessary for function. SCR2 and SCR4 provide the proper conformation for the active site on SCR3 (By similarity).</text>
</comment>
<comment type="similarity">
    <text evidence="6">Belongs to the receptors of complement activation (RCA) family.</text>
</comment>
<organism>
    <name type="scientific">Mus musculus</name>
    <name type="common">Mouse</name>
    <dbReference type="NCBI Taxonomy" id="10090"/>
    <lineage>
        <taxon>Eukaryota</taxon>
        <taxon>Metazoa</taxon>
        <taxon>Chordata</taxon>
        <taxon>Craniata</taxon>
        <taxon>Vertebrata</taxon>
        <taxon>Euteleostomi</taxon>
        <taxon>Mammalia</taxon>
        <taxon>Eutheria</taxon>
        <taxon>Euarchontoglires</taxon>
        <taxon>Glires</taxon>
        <taxon>Rodentia</taxon>
        <taxon>Myomorpha</taxon>
        <taxon>Muroidea</taxon>
        <taxon>Muridae</taxon>
        <taxon>Murinae</taxon>
        <taxon>Mus</taxon>
        <taxon>Mus</taxon>
    </lineage>
</organism>
<name>DAF2_MOUSE</name>
<keyword id="KW-0180">Complement pathway</keyword>
<keyword id="KW-1015">Disulfide bond</keyword>
<keyword id="KW-0325">Glycoprotein</keyword>
<keyword id="KW-0391">Immunity</keyword>
<keyword id="KW-0399">Innate immunity</keyword>
<keyword id="KW-0472">Membrane</keyword>
<keyword id="KW-1185">Reference proteome</keyword>
<keyword id="KW-0677">Repeat</keyword>
<keyword id="KW-0732">Signal</keyword>
<keyword id="KW-0768">Sushi</keyword>
<keyword id="KW-0812">Transmembrane</keyword>
<keyword id="KW-1133">Transmembrane helix</keyword>
<reference key="1">
    <citation type="journal article" date="1995" name="J. Immunol.">
        <title>Molecular cloning and chromosomal localization of the mouse decay-accelerating factor genes. Duplicated genes encode glycosylphosphatidylinositol-anchored and transmembrane forms.</title>
        <authorList>
            <person name="Spicer A.P."/>
            <person name="Seldin M.F."/>
            <person name="Gendler S.J."/>
        </authorList>
    </citation>
    <scope>NUCLEOTIDE SEQUENCE [MRNA]</scope>
    <source>
        <strain>C57BL/6J</strain>
        <tissue>Testis</tissue>
    </source>
</reference>
<reference key="2">
    <citation type="journal article" date="2009" name="PLoS Biol.">
        <title>Lineage-specific biology revealed by a finished genome assembly of the mouse.</title>
        <authorList>
            <person name="Church D.M."/>
            <person name="Goodstadt L."/>
            <person name="Hillier L.W."/>
            <person name="Zody M.C."/>
            <person name="Goldstein S."/>
            <person name="She X."/>
            <person name="Bult C.J."/>
            <person name="Agarwala R."/>
            <person name="Cherry J.L."/>
            <person name="DiCuccio M."/>
            <person name="Hlavina W."/>
            <person name="Kapustin Y."/>
            <person name="Meric P."/>
            <person name="Maglott D."/>
            <person name="Birtle Z."/>
            <person name="Marques A.C."/>
            <person name="Graves T."/>
            <person name="Zhou S."/>
            <person name="Teague B."/>
            <person name="Potamousis K."/>
            <person name="Churas C."/>
            <person name="Place M."/>
            <person name="Herschleb J."/>
            <person name="Runnheim R."/>
            <person name="Forrest D."/>
            <person name="Amos-Landgraf J."/>
            <person name="Schwartz D.C."/>
            <person name="Cheng Z."/>
            <person name="Lindblad-Toh K."/>
            <person name="Eichler E.E."/>
            <person name="Ponting C.P."/>
        </authorList>
    </citation>
    <scope>NUCLEOTIDE SEQUENCE [LARGE SCALE GENOMIC DNA]</scope>
    <source>
        <strain>C57BL/6J</strain>
    </source>
</reference>